<keyword id="KW-0042">Antenna complex</keyword>
<keyword id="KW-0089">Bile pigment</keyword>
<keyword id="KW-0150">Chloroplast</keyword>
<keyword id="KW-0157">Chromophore</keyword>
<keyword id="KW-0249">Electron transport</keyword>
<keyword id="KW-0472">Membrane</keyword>
<keyword id="KW-0488">Methylation</keyword>
<keyword id="KW-0602">Photosynthesis</keyword>
<keyword id="KW-0605">Phycobilisome</keyword>
<keyword id="KW-0934">Plastid</keyword>
<keyword id="KW-0793">Thylakoid</keyword>
<keyword id="KW-0813">Transport</keyword>
<name>PHAA_PORPU</name>
<feature type="initiator methionine" description="Removed" evidence="1">
    <location>
        <position position="1"/>
    </location>
</feature>
<feature type="chain" id="PRO_0000199084" description="Allophycocyanin alpha chain">
    <location>
        <begin position="2"/>
        <end position="161"/>
    </location>
</feature>
<feature type="binding site" description="covalent" evidence="1">
    <location>
        <position position="81"/>
    </location>
    <ligand>
        <name>(2R,3E)-phycocyanobilin</name>
        <dbReference type="ChEBI" id="CHEBI:85275"/>
    </ligand>
</feature>
<feature type="modified residue" description="N4-methylasparagine" evidence="1">
    <location>
        <position position="71"/>
    </location>
</feature>
<comment type="function">
    <text>Light-harvesting photosynthetic bile pigment-protein from the phycobiliprotein complex. Allophycocyanin has a maximum absorption at approximately 650 nanometers.</text>
</comment>
<comment type="subunit">
    <text evidence="1">Heterodimer of an alpha and a beta chain.</text>
</comment>
<comment type="subcellular location">
    <subcellularLocation>
        <location evidence="1">Plastid</location>
        <location evidence="1">Chloroplast thylakoid membrane</location>
        <topology evidence="1">Peripheral membrane protein</topology>
        <orientation evidence="1">Stromal side</orientation>
    </subcellularLocation>
    <text evidence="1">Forms the core of the phycobilisome.</text>
</comment>
<comment type="PTM">
    <text evidence="1">Contains one covalently linked phycocyanobilin chromophore.</text>
</comment>
<comment type="similarity">
    <text evidence="2">Belongs to the phycobiliprotein family.</text>
</comment>
<geneLocation type="chloroplast"/>
<accession>P51262</accession>
<dbReference type="EMBL" id="U38804">
    <property type="protein sequence ID" value="AAC08148.1"/>
    <property type="molecule type" value="Genomic_DNA"/>
</dbReference>
<dbReference type="PIR" id="S73183">
    <property type="entry name" value="S73183"/>
</dbReference>
<dbReference type="RefSeq" id="NP_053872.1">
    <property type="nucleotide sequence ID" value="NC_000925.1"/>
</dbReference>
<dbReference type="SMR" id="P51262"/>
<dbReference type="GeneID" id="809891"/>
<dbReference type="GO" id="GO:0009535">
    <property type="term" value="C:chloroplast thylakoid membrane"/>
    <property type="evidence" value="ECO:0007669"/>
    <property type="project" value="UniProtKB-SubCell"/>
</dbReference>
<dbReference type="GO" id="GO:0030089">
    <property type="term" value="C:phycobilisome"/>
    <property type="evidence" value="ECO:0007669"/>
    <property type="project" value="UniProtKB-KW"/>
</dbReference>
<dbReference type="GO" id="GO:0015979">
    <property type="term" value="P:photosynthesis"/>
    <property type="evidence" value="ECO:0007669"/>
    <property type="project" value="UniProtKB-KW"/>
</dbReference>
<dbReference type="CDD" id="cd12125">
    <property type="entry name" value="APC_alpha"/>
    <property type="match status" value="1"/>
</dbReference>
<dbReference type="Gene3D" id="1.10.490.20">
    <property type="entry name" value="Phycocyanins"/>
    <property type="match status" value="1"/>
</dbReference>
<dbReference type="InterPro" id="IPR009050">
    <property type="entry name" value="Globin-like_sf"/>
</dbReference>
<dbReference type="InterPro" id="IPR012128">
    <property type="entry name" value="Phycobilisome_asu/bsu"/>
</dbReference>
<dbReference type="InterPro" id="IPR038719">
    <property type="entry name" value="Phycobilisome_asu/bsu_sf"/>
</dbReference>
<dbReference type="PANTHER" id="PTHR34011:SF2">
    <property type="entry name" value="ALLOPHYCOCYANIN ALPHA CHAIN"/>
    <property type="match status" value="1"/>
</dbReference>
<dbReference type="PANTHER" id="PTHR34011">
    <property type="entry name" value="PHYCOBILISOME 32.1 KDA LINKER POLYPEPTIDE, PHYCOCYANIN-ASSOCIATED, ROD 2-RELATED"/>
    <property type="match status" value="1"/>
</dbReference>
<dbReference type="Pfam" id="PF00502">
    <property type="entry name" value="Phycobilisome"/>
    <property type="match status" value="1"/>
</dbReference>
<dbReference type="PIRSF" id="PIRSF000081">
    <property type="entry name" value="Phycocyanin"/>
    <property type="match status" value="1"/>
</dbReference>
<dbReference type="SUPFAM" id="SSF46458">
    <property type="entry name" value="Globin-like"/>
    <property type="match status" value="1"/>
</dbReference>
<organism>
    <name type="scientific">Porphyra purpurea</name>
    <name type="common">Red seaweed</name>
    <name type="synonym">Ulva purpurea</name>
    <dbReference type="NCBI Taxonomy" id="2787"/>
    <lineage>
        <taxon>Eukaryota</taxon>
        <taxon>Rhodophyta</taxon>
        <taxon>Bangiophyceae</taxon>
        <taxon>Bangiales</taxon>
        <taxon>Bangiaceae</taxon>
        <taxon>Porphyra</taxon>
    </lineage>
</organism>
<evidence type="ECO:0000250" key="1"/>
<evidence type="ECO:0000305" key="2"/>
<protein>
    <recommendedName>
        <fullName>Allophycocyanin alpha chain</fullName>
    </recommendedName>
</protein>
<sequence>MSIVTKSIVNADAEARYLSPGELDRIKSFVLSGQRRLRIAQILTDNRERIVKQGGQQLFQKRPDVVSPGGNAYGEEMTATCLRDLDYYLRLVTYGIVAGDVTPIEEIGLVGVKEMYNSLGTPISGVAEGVKCMKSVACSLLAGEDSAEAGFYFDYTLGAMQ</sequence>
<proteinExistence type="inferred from homology"/>
<reference key="1">
    <citation type="journal article" date="1995" name="Plant Mol. Biol. Rep.">
        <title>Complete nucleotide sequence of the Porphyra purpurea chloroplast genome.</title>
        <authorList>
            <person name="Reith M.E."/>
            <person name="Munholland J."/>
        </authorList>
    </citation>
    <scope>NUCLEOTIDE SEQUENCE [LARGE SCALE GENOMIC DNA]</scope>
    <source>
        <strain>Avonport</strain>
    </source>
</reference>
<gene>
    <name type="primary">apcA</name>
</gene>